<name>XERC_SHIFL</name>
<proteinExistence type="inferred from homology"/>
<protein>
    <recommendedName>
        <fullName evidence="1">Tyrosine recombinase XerC</fullName>
    </recommendedName>
</protein>
<evidence type="ECO:0000255" key="1">
    <source>
        <dbReference type="HAMAP-Rule" id="MF_01808"/>
    </source>
</evidence>
<evidence type="ECO:0000255" key="2">
    <source>
        <dbReference type="PROSITE-ProRule" id="PRU01246"/>
    </source>
</evidence>
<evidence type="ECO:0000255" key="3">
    <source>
        <dbReference type="PROSITE-ProRule" id="PRU01248"/>
    </source>
</evidence>
<dbReference type="EMBL" id="AE005674">
    <property type="protein sequence ID" value="AAN45325.1"/>
    <property type="molecule type" value="Genomic_DNA"/>
</dbReference>
<dbReference type="EMBL" id="AE014073">
    <property type="protein sequence ID" value="AAP18875.1"/>
    <property type="molecule type" value="Genomic_DNA"/>
</dbReference>
<dbReference type="RefSeq" id="NP_709618.1">
    <property type="nucleotide sequence ID" value="NC_004337.2"/>
</dbReference>
<dbReference type="RefSeq" id="WP_000130686.1">
    <property type="nucleotide sequence ID" value="NZ_WPGW01000139.1"/>
</dbReference>
<dbReference type="SMR" id="Q7ZAL9"/>
<dbReference type="STRING" id="198214.SF3889"/>
<dbReference type="PaxDb" id="198214-SF3889"/>
<dbReference type="GeneID" id="1026940"/>
<dbReference type="GeneID" id="75174046"/>
<dbReference type="KEGG" id="sfl:SF3889"/>
<dbReference type="KEGG" id="sfx:S3867"/>
<dbReference type="PATRIC" id="fig|198214.7.peg.4586"/>
<dbReference type="HOGENOM" id="CLU_027562_9_0_6"/>
<dbReference type="Proteomes" id="UP000001006">
    <property type="component" value="Chromosome"/>
</dbReference>
<dbReference type="Proteomes" id="UP000002673">
    <property type="component" value="Chromosome"/>
</dbReference>
<dbReference type="GO" id="GO:0005737">
    <property type="term" value="C:cytoplasm"/>
    <property type="evidence" value="ECO:0007669"/>
    <property type="project" value="UniProtKB-SubCell"/>
</dbReference>
<dbReference type="GO" id="GO:0003677">
    <property type="term" value="F:DNA binding"/>
    <property type="evidence" value="ECO:0007669"/>
    <property type="project" value="UniProtKB-KW"/>
</dbReference>
<dbReference type="GO" id="GO:0009037">
    <property type="term" value="F:tyrosine-based site-specific recombinase activity"/>
    <property type="evidence" value="ECO:0007669"/>
    <property type="project" value="UniProtKB-UniRule"/>
</dbReference>
<dbReference type="GO" id="GO:0051301">
    <property type="term" value="P:cell division"/>
    <property type="evidence" value="ECO:0007669"/>
    <property type="project" value="UniProtKB-KW"/>
</dbReference>
<dbReference type="GO" id="GO:0007059">
    <property type="term" value="P:chromosome segregation"/>
    <property type="evidence" value="ECO:0007669"/>
    <property type="project" value="UniProtKB-UniRule"/>
</dbReference>
<dbReference type="GO" id="GO:0006313">
    <property type="term" value="P:DNA transposition"/>
    <property type="evidence" value="ECO:0007669"/>
    <property type="project" value="UniProtKB-UniRule"/>
</dbReference>
<dbReference type="CDD" id="cd00798">
    <property type="entry name" value="INT_XerDC_C"/>
    <property type="match status" value="1"/>
</dbReference>
<dbReference type="FunFam" id="1.10.443.10:FF:000002">
    <property type="entry name" value="Tyrosine recombinase XerC"/>
    <property type="match status" value="1"/>
</dbReference>
<dbReference type="Gene3D" id="1.10.150.130">
    <property type="match status" value="1"/>
</dbReference>
<dbReference type="Gene3D" id="1.10.443.10">
    <property type="entry name" value="Intergrase catalytic core"/>
    <property type="match status" value="1"/>
</dbReference>
<dbReference type="HAMAP" id="MF_01808">
    <property type="entry name" value="Recomb_XerC_XerD"/>
    <property type="match status" value="1"/>
</dbReference>
<dbReference type="InterPro" id="IPR044068">
    <property type="entry name" value="CB"/>
</dbReference>
<dbReference type="InterPro" id="IPR011010">
    <property type="entry name" value="DNA_brk_join_enz"/>
</dbReference>
<dbReference type="InterPro" id="IPR013762">
    <property type="entry name" value="Integrase-like_cat_sf"/>
</dbReference>
<dbReference type="InterPro" id="IPR002104">
    <property type="entry name" value="Integrase_catalytic"/>
</dbReference>
<dbReference type="InterPro" id="IPR010998">
    <property type="entry name" value="Integrase_recombinase_N"/>
</dbReference>
<dbReference type="InterPro" id="IPR004107">
    <property type="entry name" value="Integrase_SAM-like_N"/>
</dbReference>
<dbReference type="InterPro" id="IPR011931">
    <property type="entry name" value="Recomb_XerC"/>
</dbReference>
<dbReference type="InterPro" id="IPR023009">
    <property type="entry name" value="Tyrosine_recombinase_XerC/XerD"/>
</dbReference>
<dbReference type="InterPro" id="IPR050090">
    <property type="entry name" value="Tyrosine_recombinase_XerCD"/>
</dbReference>
<dbReference type="NCBIfam" id="NF001399">
    <property type="entry name" value="PRK00283.1"/>
    <property type="match status" value="1"/>
</dbReference>
<dbReference type="NCBIfam" id="TIGR02224">
    <property type="entry name" value="recomb_XerC"/>
    <property type="match status" value="1"/>
</dbReference>
<dbReference type="PANTHER" id="PTHR30349">
    <property type="entry name" value="PHAGE INTEGRASE-RELATED"/>
    <property type="match status" value="1"/>
</dbReference>
<dbReference type="PANTHER" id="PTHR30349:SF81">
    <property type="entry name" value="TYROSINE RECOMBINASE XERC"/>
    <property type="match status" value="1"/>
</dbReference>
<dbReference type="Pfam" id="PF02899">
    <property type="entry name" value="Phage_int_SAM_1"/>
    <property type="match status" value="1"/>
</dbReference>
<dbReference type="Pfam" id="PF00589">
    <property type="entry name" value="Phage_integrase"/>
    <property type="match status" value="1"/>
</dbReference>
<dbReference type="SUPFAM" id="SSF56349">
    <property type="entry name" value="DNA breaking-rejoining enzymes"/>
    <property type="match status" value="1"/>
</dbReference>
<dbReference type="SUPFAM" id="SSF47823">
    <property type="entry name" value="lambda integrase-like, N-terminal domain"/>
    <property type="match status" value="1"/>
</dbReference>
<dbReference type="PROSITE" id="PS51900">
    <property type="entry name" value="CB"/>
    <property type="match status" value="1"/>
</dbReference>
<dbReference type="PROSITE" id="PS51898">
    <property type="entry name" value="TYR_RECOMBINASE"/>
    <property type="match status" value="1"/>
</dbReference>
<reference key="1">
    <citation type="journal article" date="2002" name="Nucleic Acids Res.">
        <title>Genome sequence of Shigella flexneri 2a: insights into pathogenicity through comparison with genomes of Escherichia coli K12 and O157.</title>
        <authorList>
            <person name="Jin Q."/>
            <person name="Yuan Z."/>
            <person name="Xu J."/>
            <person name="Wang Y."/>
            <person name="Shen Y."/>
            <person name="Lu W."/>
            <person name="Wang J."/>
            <person name="Liu H."/>
            <person name="Yang J."/>
            <person name="Yang F."/>
            <person name="Zhang X."/>
            <person name="Zhang J."/>
            <person name="Yang G."/>
            <person name="Wu H."/>
            <person name="Qu D."/>
            <person name="Dong J."/>
            <person name="Sun L."/>
            <person name="Xue Y."/>
            <person name="Zhao A."/>
            <person name="Gao Y."/>
            <person name="Zhu J."/>
            <person name="Kan B."/>
            <person name="Ding K."/>
            <person name="Chen S."/>
            <person name="Cheng H."/>
            <person name="Yao Z."/>
            <person name="He B."/>
            <person name="Chen R."/>
            <person name="Ma D."/>
            <person name="Qiang B."/>
            <person name="Wen Y."/>
            <person name="Hou Y."/>
            <person name="Yu J."/>
        </authorList>
    </citation>
    <scope>NUCLEOTIDE SEQUENCE [LARGE SCALE GENOMIC DNA]</scope>
    <source>
        <strain>301 / Serotype 2a</strain>
    </source>
</reference>
<reference key="2">
    <citation type="journal article" date="2003" name="Infect. Immun.">
        <title>Complete genome sequence and comparative genomics of Shigella flexneri serotype 2a strain 2457T.</title>
        <authorList>
            <person name="Wei J."/>
            <person name="Goldberg M.B."/>
            <person name="Burland V."/>
            <person name="Venkatesan M.M."/>
            <person name="Deng W."/>
            <person name="Fournier G."/>
            <person name="Mayhew G.F."/>
            <person name="Plunkett G. III"/>
            <person name="Rose D.J."/>
            <person name="Darling A."/>
            <person name="Mau B."/>
            <person name="Perna N.T."/>
            <person name="Payne S.M."/>
            <person name="Runyen-Janecky L.J."/>
            <person name="Zhou S."/>
            <person name="Schwartz D.C."/>
            <person name="Blattner F.R."/>
        </authorList>
    </citation>
    <scope>NUCLEOTIDE SEQUENCE [LARGE SCALE GENOMIC DNA]</scope>
    <source>
        <strain>ATCC 700930 / 2457T / Serotype 2a</strain>
    </source>
</reference>
<comment type="function">
    <text evidence="1">Site-specific tyrosine recombinase, which acts by catalyzing the cutting and rejoining of the recombining DNA molecules. Binds cooperatively to specific DNA consensus sequences that are separated from XerD binding sites by a short central region, forming the heterotetrameric XerC-XerD complex that recombines DNA substrates. The complex is essential to convert dimers of the bacterial chromosome into monomers to permit their segregation at cell division. It also contributes to the segregational stability of plasmids. In the complex XerC specifically exchanges the top DNA strands.</text>
</comment>
<comment type="activity regulation">
    <text evidence="1">FtsK may regulate the catalytic switch between XerC and XerD in the heterotetrameric complex during the two steps of the recombination process.</text>
</comment>
<comment type="subunit">
    <text evidence="1">Forms a cyclic heterotetrameric complex composed of two molecules of XerC and two molecules of XerD, in which XerC interacts with XerD via its C-terminal region, XerD interacts with XerC via its C-terminal region and so on.</text>
</comment>
<comment type="subcellular location">
    <subcellularLocation>
        <location evidence="1">Cytoplasm</location>
    </subcellularLocation>
</comment>
<comment type="similarity">
    <text evidence="1">Belongs to the 'phage' integrase family. XerC subfamily.</text>
</comment>
<keyword id="KW-0131">Cell cycle</keyword>
<keyword id="KW-0132">Cell division</keyword>
<keyword id="KW-0159">Chromosome partition</keyword>
<keyword id="KW-0963">Cytoplasm</keyword>
<keyword id="KW-0229">DNA integration</keyword>
<keyword id="KW-0233">DNA recombination</keyword>
<keyword id="KW-0238">DNA-binding</keyword>
<keyword id="KW-1185">Reference proteome</keyword>
<feature type="chain" id="PRO_0000095328" description="Tyrosine recombinase XerC">
    <location>
        <begin position="1"/>
        <end position="298"/>
    </location>
</feature>
<feature type="domain" description="Core-binding (CB)" evidence="3">
    <location>
        <begin position="2"/>
        <end position="88"/>
    </location>
</feature>
<feature type="domain" description="Tyr recombinase" evidence="2">
    <location>
        <begin position="109"/>
        <end position="288"/>
    </location>
</feature>
<feature type="active site" evidence="1">
    <location>
        <position position="148"/>
    </location>
</feature>
<feature type="active site" evidence="1">
    <location>
        <position position="172"/>
    </location>
</feature>
<feature type="active site" evidence="1">
    <location>
        <position position="240"/>
    </location>
</feature>
<feature type="active site" evidence="1">
    <location>
        <position position="243"/>
    </location>
</feature>
<feature type="active site" evidence="1">
    <location>
        <position position="266"/>
    </location>
</feature>
<feature type="active site" description="O-(3'-phospho-DNA)-tyrosine intermediate" evidence="1">
    <location>
        <position position="275"/>
    </location>
</feature>
<sequence>MTDLHTDVERYLRYLSVERQLSPITLLNYQRQLEAIINFASENGLQSWQQCDAAMVRNFAVRSRRKGLGAASLALRLSALRSFFDWLVSQNELKANPAKGVSAPKAPRHLPKNIDVDDMNRLLDIDINDPLAVRDRAMLEVMYGAGLRLSELVGLDIKHLDLESGEVWVMGKGSKERRLPIGRNAVAWIEHWLDLRDLFGSEDDALFLSKLGKRISARNVQKRFAEWGIKQGLNNHVHPHKLRHSFATHMLESSGDLRGVQELLGHANLSTTQIYTHLDFQHLASVYDAAHPRAKRGK</sequence>
<organism>
    <name type="scientific">Shigella flexneri</name>
    <dbReference type="NCBI Taxonomy" id="623"/>
    <lineage>
        <taxon>Bacteria</taxon>
        <taxon>Pseudomonadati</taxon>
        <taxon>Pseudomonadota</taxon>
        <taxon>Gammaproteobacteria</taxon>
        <taxon>Enterobacterales</taxon>
        <taxon>Enterobacteriaceae</taxon>
        <taxon>Shigella</taxon>
    </lineage>
</organism>
<accession>Q7ZAL9</accession>
<gene>
    <name evidence="1" type="primary">xerC</name>
    <name type="ordered locus">SF3889</name>
    <name type="ordered locus">S3867</name>
</gene>